<sequence>MNTLQKIAYRSKQQPLVPLGTLLTTAAVVLAAKSLKQGRKKDTQRYFRYRVGFQAFTLVALVIGGMYYQKESAEQKQTREDKLREKAKLREQLWIEELERRDQLIKARKQRLEESKKELMKVAQEGFEQERERELKKEDK</sequence>
<organism>
    <name type="scientific">Clavispora lusitaniae (strain ATCC 42720)</name>
    <name type="common">Yeast</name>
    <name type="synonym">Candida lusitaniae</name>
    <dbReference type="NCBI Taxonomy" id="306902"/>
    <lineage>
        <taxon>Eukaryota</taxon>
        <taxon>Fungi</taxon>
        <taxon>Dikarya</taxon>
        <taxon>Ascomycota</taxon>
        <taxon>Saccharomycotina</taxon>
        <taxon>Pichiomycetes</taxon>
        <taxon>Metschnikowiaceae</taxon>
        <taxon>Clavispora</taxon>
    </lineage>
</organism>
<gene>
    <name type="primary">RCF1</name>
    <name type="synonym">AIM31</name>
    <name type="ORF">CLUG_03615</name>
</gene>
<comment type="function">
    <text evidence="1">Cytochrome c oxidase subunit which plays a role in assembly of respiratory supercomplexes.</text>
</comment>
<comment type="subunit">
    <text evidence="1">Associates with the respiratory chain complex III/complex IV supercomplex.</text>
</comment>
<comment type="subcellular location">
    <subcellularLocation>
        <location evidence="3">Mitochondrion membrane</location>
        <topology evidence="3">Multi-pass membrane protein</topology>
    </subcellularLocation>
</comment>
<comment type="similarity">
    <text evidence="4">Belongs to the RCF1 family.</text>
</comment>
<protein>
    <recommendedName>
        <fullName>Respiratory supercomplex factor 1, mitochondrial</fullName>
    </recommendedName>
</protein>
<feature type="chain" id="PRO_0000399629" description="Respiratory supercomplex factor 1, mitochondrial">
    <location>
        <begin position="1"/>
        <end position="140"/>
    </location>
</feature>
<feature type="transmembrane region" description="Helical" evidence="3">
    <location>
        <begin position="16"/>
        <end position="32"/>
    </location>
</feature>
<feature type="transmembrane region" description="Helical" evidence="3">
    <location>
        <begin position="46"/>
        <end position="68"/>
    </location>
</feature>
<feature type="domain" description="HIG1" evidence="3">
    <location>
        <begin position="1"/>
        <end position="79"/>
    </location>
</feature>
<feature type="coiled-coil region" evidence="2">
    <location>
        <begin position="68"/>
        <end position="126"/>
    </location>
</feature>
<name>RCF1_CLAL4</name>
<dbReference type="EMBL" id="CH408079">
    <property type="protein sequence ID" value="EEQ39487.1"/>
    <property type="molecule type" value="Genomic_DNA"/>
</dbReference>
<dbReference type="RefSeq" id="XP_002616374.1">
    <property type="nucleotide sequence ID" value="XM_002616328.1"/>
</dbReference>
<dbReference type="SMR" id="C4Y631"/>
<dbReference type="FunCoup" id="C4Y631">
    <property type="interactions" value="83"/>
</dbReference>
<dbReference type="STRING" id="306902.C4Y631"/>
<dbReference type="GeneID" id="8496754"/>
<dbReference type="KEGG" id="clu:CLUG_03615"/>
<dbReference type="VEuPathDB" id="FungiDB:CLUG_03615"/>
<dbReference type="HOGENOM" id="CLU_087356_1_0_1"/>
<dbReference type="InParanoid" id="C4Y631"/>
<dbReference type="OMA" id="YYRTERT"/>
<dbReference type="OrthoDB" id="107897at4891"/>
<dbReference type="Proteomes" id="UP000007703">
    <property type="component" value="Unassembled WGS sequence"/>
</dbReference>
<dbReference type="GO" id="GO:0005743">
    <property type="term" value="C:mitochondrial inner membrane"/>
    <property type="evidence" value="ECO:0007669"/>
    <property type="project" value="EnsemblFungi"/>
</dbReference>
<dbReference type="GO" id="GO:0098803">
    <property type="term" value="C:respiratory chain complex"/>
    <property type="evidence" value="ECO:0007669"/>
    <property type="project" value="EnsemblFungi"/>
</dbReference>
<dbReference type="GO" id="GO:0033617">
    <property type="term" value="P:mitochondrial cytochrome c oxidase assembly"/>
    <property type="evidence" value="ECO:0007669"/>
    <property type="project" value="EnsemblFungi"/>
</dbReference>
<dbReference type="GO" id="GO:0097250">
    <property type="term" value="P:mitochondrial respirasome assembly"/>
    <property type="evidence" value="ECO:0007669"/>
    <property type="project" value="EnsemblFungi"/>
</dbReference>
<dbReference type="GO" id="GO:0010155">
    <property type="term" value="P:regulation of proton transport"/>
    <property type="evidence" value="ECO:0007669"/>
    <property type="project" value="EnsemblFungi"/>
</dbReference>
<dbReference type="Gene3D" id="6.10.140.1320">
    <property type="match status" value="1"/>
</dbReference>
<dbReference type="InterPro" id="IPR007667">
    <property type="entry name" value="Hypoxia_induced_domain"/>
</dbReference>
<dbReference type="InterPro" id="IPR050355">
    <property type="entry name" value="RCF1"/>
</dbReference>
<dbReference type="PANTHER" id="PTHR12297:SF3">
    <property type="entry name" value="HIG1 DOMAIN FAMILY MEMBER 1A"/>
    <property type="match status" value="1"/>
</dbReference>
<dbReference type="PANTHER" id="PTHR12297">
    <property type="entry name" value="HYPOXIA-INDUCBILE GENE 1 HIG1 -RELATED"/>
    <property type="match status" value="1"/>
</dbReference>
<dbReference type="Pfam" id="PF04588">
    <property type="entry name" value="HIG_1_N"/>
    <property type="match status" value="1"/>
</dbReference>
<dbReference type="PROSITE" id="PS51503">
    <property type="entry name" value="HIG1"/>
    <property type="match status" value="1"/>
</dbReference>
<keyword id="KW-0175">Coiled coil</keyword>
<keyword id="KW-0472">Membrane</keyword>
<keyword id="KW-0496">Mitochondrion</keyword>
<keyword id="KW-1185">Reference proteome</keyword>
<keyword id="KW-0812">Transmembrane</keyword>
<keyword id="KW-1133">Transmembrane helix</keyword>
<reference key="1">
    <citation type="journal article" date="2009" name="Nature">
        <title>Evolution of pathogenicity and sexual reproduction in eight Candida genomes.</title>
        <authorList>
            <person name="Butler G."/>
            <person name="Rasmussen M.D."/>
            <person name="Lin M.F."/>
            <person name="Santos M.A.S."/>
            <person name="Sakthikumar S."/>
            <person name="Munro C.A."/>
            <person name="Rheinbay E."/>
            <person name="Grabherr M."/>
            <person name="Forche A."/>
            <person name="Reedy J.L."/>
            <person name="Agrafioti I."/>
            <person name="Arnaud M.B."/>
            <person name="Bates S."/>
            <person name="Brown A.J.P."/>
            <person name="Brunke S."/>
            <person name="Costanzo M.C."/>
            <person name="Fitzpatrick D.A."/>
            <person name="de Groot P.W.J."/>
            <person name="Harris D."/>
            <person name="Hoyer L.L."/>
            <person name="Hube B."/>
            <person name="Klis F.M."/>
            <person name="Kodira C."/>
            <person name="Lennard N."/>
            <person name="Logue M.E."/>
            <person name="Martin R."/>
            <person name="Neiman A.M."/>
            <person name="Nikolaou E."/>
            <person name="Quail M.A."/>
            <person name="Quinn J."/>
            <person name="Santos M.C."/>
            <person name="Schmitzberger F.F."/>
            <person name="Sherlock G."/>
            <person name="Shah P."/>
            <person name="Silverstein K.A.T."/>
            <person name="Skrzypek M.S."/>
            <person name="Soll D."/>
            <person name="Staggs R."/>
            <person name="Stansfield I."/>
            <person name="Stumpf M.P.H."/>
            <person name="Sudbery P.E."/>
            <person name="Srikantha T."/>
            <person name="Zeng Q."/>
            <person name="Berman J."/>
            <person name="Berriman M."/>
            <person name="Heitman J."/>
            <person name="Gow N.A.R."/>
            <person name="Lorenz M.C."/>
            <person name="Birren B.W."/>
            <person name="Kellis M."/>
            <person name="Cuomo C.A."/>
        </authorList>
    </citation>
    <scope>NUCLEOTIDE SEQUENCE [LARGE SCALE GENOMIC DNA]</scope>
    <source>
        <strain>ATCC 42720</strain>
    </source>
</reference>
<accession>C4Y631</accession>
<evidence type="ECO:0000250" key="1"/>
<evidence type="ECO:0000255" key="2"/>
<evidence type="ECO:0000255" key="3">
    <source>
        <dbReference type="PROSITE-ProRule" id="PRU00836"/>
    </source>
</evidence>
<evidence type="ECO:0000305" key="4"/>
<proteinExistence type="inferred from homology"/>